<gene>
    <name type="primary">Ergic3</name>
    <name type="synonym">Erv46</name>
    <name type="synonym">Sdbcag84</name>
</gene>
<evidence type="ECO:0000250" key="1">
    <source>
        <dbReference type="UniProtKB" id="Q9Y282"/>
    </source>
</evidence>
<evidence type="ECO:0000255" key="2"/>
<evidence type="ECO:0000269" key="3">
    <source>
    </source>
</evidence>
<evidence type="ECO:0000303" key="4">
    <source>
    </source>
</evidence>
<evidence type="ECO:0000305" key="5"/>
<keyword id="KW-0007">Acetylation</keyword>
<keyword id="KW-0025">Alternative splicing</keyword>
<keyword id="KW-0256">Endoplasmic reticulum</keyword>
<keyword id="KW-0931">ER-Golgi transport</keyword>
<keyword id="KW-0325">Glycoprotein</keyword>
<keyword id="KW-0333">Golgi apparatus</keyword>
<keyword id="KW-0472">Membrane</keyword>
<keyword id="KW-0597">Phosphoprotein</keyword>
<keyword id="KW-1185">Reference proteome</keyword>
<keyword id="KW-0812">Transmembrane</keyword>
<keyword id="KW-1133">Transmembrane helix</keyword>
<keyword id="KW-0813">Transport</keyword>
<feature type="chain" id="PRO_0000097641" description="Endoplasmic reticulum-Golgi intermediate compartment protein 3">
    <location>
        <begin position="1"/>
        <end position="383"/>
    </location>
</feature>
<feature type="topological domain" description="Cytoplasmic" evidence="2">
    <location>
        <begin position="1"/>
        <end position="25"/>
    </location>
</feature>
<feature type="transmembrane region" description="Helical" evidence="2">
    <location>
        <begin position="26"/>
        <end position="46"/>
    </location>
</feature>
<feature type="topological domain" description="Lumenal" evidence="2">
    <location>
        <begin position="47"/>
        <end position="341"/>
    </location>
</feature>
<feature type="transmembrane region" description="Helical" evidence="2">
    <location>
        <begin position="342"/>
        <end position="362"/>
    </location>
</feature>
<feature type="topological domain" description="Cytoplasmic" evidence="2">
    <location>
        <begin position="363"/>
        <end position="383"/>
    </location>
</feature>
<feature type="region of interest" description="Required for MARCHF2-mediated degradation" evidence="1">
    <location>
        <begin position="1"/>
        <end position="25"/>
    </location>
</feature>
<feature type="site" description="Ubiquitinated; by MARCHF2" evidence="1">
    <location>
        <position position="8"/>
    </location>
</feature>
<feature type="modified residue" description="N-acetylmethionine" evidence="1">
    <location>
        <position position="1"/>
    </location>
</feature>
<feature type="modified residue" description="Phosphoserine" evidence="1">
    <location>
        <position position="116"/>
    </location>
</feature>
<feature type="glycosylation site" description="N-linked (GlcNAc...) asparagine" evidence="2">
    <location>
        <position position="266"/>
    </location>
</feature>
<feature type="splice variant" id="VSP_019209" description="In isoform 2." evidence="4">
    <original>V</original>
    <variation>VHAVEI</variation>
    <location>
        <position position="229"/>
    </location>
</feature>
<feature type="splice variant" id="VSP_019210" description="In isoform 2." evidence="4">
    <original>N</original>
    <variation>NPSDCLQ</variation>
    <location>
        <position position="239"/>
    </location>
</feature>
<name>ERGI3_MOUSE</name>
<comment type="function">
    <text evidence="1">Possible role in transport between endoplasmic reticulum and Golgi. Positively regulates trafficking of the secretory proteins alpha1-antitrypsin/SERPINA1 and HP/haptoglobin (By similarity).</text>
</comment>
<comment type="subunit">
    <text evidence="1">Forms homodimers (By similarity). May form a heteromeric complex composed of ERGIC1, ERGIC2 and ERGIC3 (By similarity). Within the complex, the interaction with ERGIC1 is direct (By similarity). Interacts with ERGIC1/ERGIC32 (By similarity). Interacts with ERGIC2, the interaction is required for the stable expression of both proteins (By similarity). Interacts with MARCHF2 (By similarity). Interacts with SERPINA1/alpha1-antitrypsin and HP/haptoglobin (By similarity).</text>
</comment>
<comment type="subcellular location">
    <subcellularLocation>
        <location evidence="3">Endoplasmic reticulum-Golgi intermediate compartment membrane</location>
        <topology evidence="3">Multi-pass membrane protein</topology>
    </subcellularLocation>
    <subcellularLocation>
        <location evidence="3">Golgi apparatus</location>
        <location evidence="3">cis-Golgi network membrane</location>
        <topology evidence="3">Multi-pass membrane protein</topology>
    </subcellularLocation>
    <subcellularLocation>
        <location evidence="3">Endoplasmic reticulum membrane</location>
        <topology evidence="3">Multi-pass membrane protein</topology>
    </subcellularLocation>
    <text>Cycles between the endoplasmic reticulum and the Golgi.</text>
</comment>
<comment type="alternative products">
    <event type="alternative splicing"/>
    <isoform>
        <id>Q9CQE7-1</id>
        <name>1</name>
        <sequence type="displayed"/>
    </isoform>
    <isoform>
        <id>Q9CQE7-2</id>
        <name>2</name>
        <sequence type="described" ref="VSP_019209 VSP_019210"/>
    </isoform>
</comment>
<comment type="tissue specificity">
    <text evidence="3">Expression is particularly strong in liver, kidney and brain but is almost undetectable in heart.</text>
</comment>
<comment type="similarity">
    <text evidence="5">Belongs to the ERGIC family.</text>
</comment>
<accession>Q9CQE7</accession>
<accession>B7ZCN9</accession>
<accession>Q6PGA7</accession>
<protein>
    <recommendedName>
        <fullName>Endoplasmic reticulum-Golgi intermediate compartment protein 3</fullName>
    </recommendedName>
    <alternativeName>
        <fullName>Serologically defined breast cancer antigen NY-BR-84 homolog</fullName>
    </alternativeName>
</protein>
<dbReference type="EMBL" id="AK009350">
    <property type="protein sequence ID" value="BAB26233.1"/>
    <property type="molecule type" value="mRNA"/>
</dbReference>
<dbReference type="EMBL" id="AK013942">
    <property type="protein sequence ID" value="BAB29073.1"/>
    <property type="molecule type" value="mRNA"/>
</dbReference>
<dbReference type="EMBL" id="AK050285">
    <property type="protein sequence ID" value="BAC34166.1"/>
    <property type="molecule type" value="mRNA"/>
</dbReference>
<dbReference type="EMBL" id="AL833786">
    <property type="status" value="NOT_ANNOTATED_CDS"/>
    <property type="molecule type" value="Genomic_DNA"/>
</dbReference>
<dbReference type="EMBL" id="BC043720">
    <property type="protein sequence ID" value="AAH43720.1"/>
    <property type="molecule type" value="mRNA"/>
</dbReference>
<dbReference type="EMBL" id="BC057130">
    <property type="protein sequence ID" value="AAH57130.1"/>
    <property type="molecule type" value="mRNA"/>
</dbReference>
<dbReference type="CCDS" id="CCDS16959.1">
    <molecule id="Q9CQE7-1"/>
</dbReference>
<dbReference type="CCDS" id="CCDS89572.1">
    <molecule id="Q9CQE7-2"/>
</dbReference>
<dbReference type="RefSeq" id="NP_001343342.1">
    <molecule id="Q9CQE7-2"/>
    <property type="nucleotide sequence ID" value="NM_001356413.1"/>
</dbReference>
<dbReference type="RefSeq" id="NP_079792.1">
    <molecule id="Q9CQE7-1"/>
    <property type="nucleotide sequence ID" value="NM_025516.5"/>
</dbReference>
<dbReference type="SMR" id="Q9CQE7"/>
<dbReference type="BioGRID" id="211417">
    <property type="interactions" value="4"/>
</dbReference>
<dbReference type="FunCoup" id="Q9CQE7">
    <property type="interactions" value="2253"/>
</dbReference>
<dbReference type="IntAct" id="Q9CQE7">
    <property type="interactions" value="1"/>
</dbReference>
<dbReference type="MINT" id="Q9CQE7"/>
<dbReference type="STRING" id="10090.ENSMUSP00000006035"/>
<dbReference type="GlyConnect" id="2285">
    <property type="glycosylation" value="2 N-Linked glycans (1 site)"/>
</dbReference>
<dbReference type="GlyCosmos" id="Q9CQE7">
    <property type="glycosylation" value="1 site, 2 glycans"/>
</dbReference>
<dbReference type="GlyGen" id="Q9CQE7">
    <property type="glycosylation" value="3 sites, 5 N-linked glycans (3 sites)"/>
</dbReference>
<dbReference type="iPTMnet" id="Q9CQE7"/>
<dbReference type="PhosphoSitePlus" id="Q9CQE7"/>
<dbReference type="SwissPalm" id="Q9CQE7"/>
<dbReference type="PaxDb" id="10090-ENSMUSP00000006035"/>
<dbReference type="PeptideAtlas" id="Q9CQE7"/>
<dbReference type="ProteomicsDB" id="275773">
    <molecule id="Q9CQE7-1"/>
</dbReference>
<dbReference type="ProteomicsDB" id="275774">
    <molecule id="Q9CQE7-2"/>
</dbReference>
<dbReference type="Pumba" id="Q9CQE7"/>
<dbReference type="Antibodypedia" id="3001">
    <property type="antibodies" value="246 antibodies from 31 providers"/>
</dbReference>
<dbReference type="DNASU" id="66366"/>
<dbReference type="Ensembl" id="ENSMUST00000006035.13">
    <molecule id="Q9CQE7-1"/>
    <property type="protein sequence ID" value="ENSMUSP00000006035.7"/>
    <property type="gene ID" value="ENSMUSG00000005881.14"/>
</dbReference>
<dbReference type="Ensembl" id="ENSMUST00000088650.11">
    <molecule id="Q9CQE7-2"/>
    <property type="protein sequence ID" value="ENSMUSP00000086025.5"/>
    <property type="gene ID" value="ENSMUSG00000005881.14"/>
</dbReference>
<dbReference type="GeneID" id="66366"/>
<dbReference type="KEGG" id="mmu:66366"/>
<dbReference type="UCSC" id="uc008nlx.1">
    <molecule id="Q9CQE7-1"/>
    <property type="organism name" value="mouse"/>
</dbReference>
<dbReference type="UCSC" id="uc008nly.1">
    <molecule id="Q9CQE7-2"/>
    <property type="organism name" value="mouse"/>
</dbReference>
<dbReference type="AGR" id="MGI:1913616"/>
<dbReference type="CTD" id="51614"/>
<dbReference type="MGI" id="MGI:1913616">
    <property type="gene designation" value="Ergic3"/>
</dbReference>
<dbReference type="VEuPathDB" id="HostDB:ENSMUSG00000005881"/>
<dbReference type="eggNOG" id="KOG2667">
    <property type="taxonomic scope" value="Eukaryota"/>
</dbReference>
<dbReference type="GeneTree" id="ENSGT00530000063113"/>
<dbReference type="HOGENOM" id="CLU_034705_1_0_1"/>
<dbReference type="InParanoid" id="Q9CQE7"/>
<dbReference type="OMA" id="QRHEGCR"/>
<dbReference type="PhylomeDB" id="Q9CQE7"/>
<dbReference type="TreeFam" id="TF300739"/>
<dbReference type="BioGRID-ORCS" id="66366">
    <property type="hits" value="3 hits in 77 CRISPR screens"/>
</dbReference>
<dbReference type="ChiTaRS" id="Ergic3">
    <property type="organism name" value="mouse"/>
</dbReference>
<dbReference type="PRO" id="PR:Q9CQE7"/>
<dbReference type="Proteomes" id="UP000000589">
    <property type="component" value="Chromosome 2"/>
</dbReference>
<dbReference type="RNAct" id="Q9CQE7">
    <property type="molecule type" value="protein"/>
</dbReference>
<dbReference type="Bgee" id="ENSMUSG00000005881">
    <property type="expression patterns" value="Expressed in molar tooth and 262 other cell types or tissues"/>
</dbReference>
<dbReference type="ExpressionAtlas" id="Q9CQE7">
    <property type="expression patterns" value="baseline and differential"/>
</dbReference>
<dbReference type="GO" id="GO:0005789">
    <property type="term" value="C:endoplasmic reticulum membrane"/>
    <property type="evidence" value="ECO:0007669"/>
    <property type="project" value="UniProtKB-SubCell"/>
</dbReference>
<dbReference type="GO" id="GO:0005793">
    <property type="term" value="C:endoplasmic reticulum-Golgi intermediate compartment"/>
    <property type="evidence" value="ECO:0000250"/>
    <property type="project" value="HGNC-UCL"/>
</dbReference>
<dbReference type="GO" id="GO:0033116">
    <property type="term" value="C:endoplasmic reticulum-Golgi intermediate compartment membrane"/>
    <property type="evidence" value="ECO:0007669"/>
    <property type="project" value="UniProtKB-SubCell"/>
</dbReference>
<dbReference type="GO" id="GO:0005794">
    <property type="term" value="C:Golgi apparatus"/>
    <property type="evidence" value="ECO:0007669"/>
    <property type="project" value="UniProtKB-SubCell"/>
</dbReference>
<dbReference type="GO" id="GO:0061852">
    <property type="term" value="C:retrograde transporter complex, Golgi to ER"/>
    <property type="evidence" value="ECO:0007669"/>
    <property type="project" value="Ensembl"/>
</dbReference>
<dbReference type="GO" id="GO:0006888">
    <property type="term" value="P:endoplasmic reticulum to Golgi vesicle-mediated transport"/>
    <property type="evidence" value="ECO:0000250"/>
    <property type="project" value="HGNC-UCL"/>
</dbReference>
<dbReference type="GO" id="GO:0090316">
    <property type="term" value="P:positive regulation of intracellular protein transport"/>
    <property type="evidence" value="ECO:0000250"/>
    <property type="project" value="UniProtKB"/>
</dbReference>
<dbReference type="InterPro" id="IPR045888">
    <property type="entry name" value="Erv"/>
</dbReference>
<dbReference type="InterPro" id="IPR012936">
    <property type="entry name" value="Erv_C"/>
</dbReference>
<dbReference type="InterPro" id="IPR039542">
    <property type="entry name" value="Erv_N"/>
</dbReference>
<dbReference type="PANTHER" id="PTHR10984">
    <property type="entry name" value="ENDOPLASMIC RETICULUM-GOLGI INTERMEDIATE COMPARTMENT PROTEIN"/>
    <property type="match status" value="1"/>
</dbReference>
<dbReference type="PANTHER" id="PTHR10984:SF25">
    <property type="entry name" value="ENDOPLASMIC RETICULUM-GOLGI INTERMEDIATE COMPARTMENT PROTEIN 3"/>
    <property type="match status" value="1"/>
</dbReference>
<dbReference type="Pfam" id="PF07970">
    <property type="entry name" value="COPIIcoated_ERV"/>
    <property type="match status" value="1"/>
</dbReference>
<dbReference type="Pfam" id="PF13850">
    <property type="entry name" value="ERGIC_N"/>
    <property type="match status" value="1"/>
</dbReference>
<reference key="1">
    <citation type="journal article" date="2005" name="Science">
        <title>The transcriptional landscape of the mammalian genome.</title>
        <authorList>
            <person name="Carninci P."/>
            <person name="Kasukawa T."/>
            <person name="Katayama S."/>
            <person name="Gough J."/>
            <person name="Frith M.C."/>
            <person name="Maeda N."/>
            <person name="Oyama R."/>
            <person name="Ravasi T."/>
            <person name="Lenhard B."/>
            <person name="Wells C."/>
            <person name="Kodzius R."/>
            <person name="Shimokawa K."/>
            <person name="Bajic V.B."/>
            <person name="Brenner S.E."/>
            <person name="Batalov S."/>
            <person name="Forrest A.R."/>
            <person name="Zavolan M."/>
            <person name="Davis M.J."/>
            <person name="Wilming L.G."/>
            <person name="Aidinis V."/>
            <person name="Allen J.E."/>
            <person name="Ambesi-Impiombato A."/>
            <person name="Apweiler R."/>
            <person name="Aturaliya R.N."/>
            <person name="Bailey T.L."/>
            <person name="Bansal M."/>
            <person name="Baxter L."/>
            <person name="Beisel K.W."/>
            <person name="Bersano T."/>
            <person name="Bono H."/>
            <person name="Chalk A.M."/>
            <person name="Chiu K.P."/>
            <person name="Choudhary V."/>
            <person name="Christoffels A."/>
            <person name="Clutterbuck D.R."/>
            <person name="Crowe M.L."/>
            <person name="Dalla E."/>
            <person name="Dalrymple B.P."/>
            <person name="de Bono B."/>
            <person name="Della Gatta G."/>
            <person name="di Bernardo D."/>
            <person name="Down T."/>
            <person name="Engstrom P."/>
            <person name="Fagiolini M."/>
            <person name="Faulkner G."/>
            <person name="Fletcher C.F."/>
            <person name="Fukushima T."/>
            <person name="Furuno M."/>
            <person name="Futaki S."/>
            <person name="Gariboldi M."/>
            <person name="Georgii-Hemming P."/>
            <person name="Gingeras T.R."/>
            <person name="Gojobori T."/>
            <person name="Green R.E."/>
            <person name="Gustincich S."/>
            <person name="Harbers M."/>
            <person name="Hayashi Y."/>
            <person name="Hensch T.K."/>
            <person name="Hirokawa N."/>
            <person name="Hill D."/>
            <person name="Huminiecki L."/>
            <person name="Iacono M."/>
            <person name="Ikeo K."/>
            <person name="Iwama A."/>
            <person name="Ishikawa T."/>
            <person name="Jakt M."/>
            <person name="Kanapin A."/>
            <person name="Katoh M."/>
            <person name="Kawasawa Y."/>
            <person name="Kelso J."/>
            <person name="Kitamura H."/>
            <person name="Kitano H."/>
            <person name="Kollias G."/>
            <person name="Krishnan S.P."/>
            <person name="Kruger A."/>
            <person name="Kummerfeld S.K."/>
            <person name="Kurochkin I.V."/>
            <person name="Lareau L.F."/>
            <person name="Lazarevic D."/>
            <person name="Lipovich L."/>
            <person name="Liu J."/>
            <person name="Liuni S."/>
            <person name="McWilliam S."/>
            <person name="Madan Babu M."/>
            <person name="Madera M."/>
            <person name="Marchionni L."/>
            <person name="Matsuda H."/>
            <person name="Matsuzawa S."/>
            <person name="Miki H."/>
            <person name="Mignone F."/>
            <person name="Miyake S."/>
            <person name="Morris K."/>
            <person name="Mottagui-Tabar S."/>
            <person name="Mulder N."/>
            <person name="Nakano N."/>
            <person name="Nakauchi H."/>
            <person name="Ng P."/>
            <person name="Nilsson R."/>
            <person name="Nishiguchi S."/>
            <person name="Nishikawa S."/>
            <person name="Nori F."/>
            <person name="Ohara O."/>
            <person name="Okazaki Y."/>
            <person name="Orlando V."/>
            <person name="Pang K.C."/>
            <person name="Pavan W.J."/>
            <person name="Pavesi G."/>
            <person name="Pesole G."/>
            <person name="Petrovsky N."/>
            <person name="Piazza S."/>
            <person name="Reed J."/>
            <person name="Reid J.F."/>
            <person name="Ring B.Z."/>
            <person name="Ringwald M."/>
            <person name="Rost B."/>
            <person name="Ruan Y."/>
            <person name="Salzberg S.L."/>
            <person name="Sandelin A."/>
            <person name="Schneider C."/>
            <person name="Schoenbach C."/>
            <person name="Sekiguchi K."/>
            <person name="Semple C.A."/>
            <person name="Seno S."/>
            <person name="Sessa L."/>
            <person name="Sheng Y."/>
            <person name="Shibata Y."/>
            <person name="Shimada H."/>
            <person name="Shimada K."/>
            <person name="Silva D."/>
            <person name="Sinclair B."/>
            <person name="Sperling S."/>
            <person name="Stupka E."/>
            <person name="Sugiura K."/>
            <person name="Sultana R."/>
            <person name="Takenaka Y."/>
            <person name="Taki K."/>
            <person name="Tammoja K."/>
            <person name="Tan S.L."/>
            <person name="Tang S."/>
            <person name="Taylor M.S."/>
            <person name="Tegner J."/>
            <person name="Teichmann S.A."/>
            <person name="Ueda H.R."/>
            <person name="van Nimwegen E."/>
            <person name="Verardo R."/>
            <person name="Wei C.L."/>
            <person name="Yagi K."/>
            <person name="Yamanishi H."/>
            <person name="Zabarovsky E."/>
            <person name="Zhu S."/>
            <person name="Zimmer A."/>
            <person name="Hide W."/>
            <person name="Bult C."/>
            <person name="Grimmond S.M."/>
            <person name="Teasdale R.D."/>
            <person name="Liu E.T."/>
            <person name="Brusic V."/>
            <person name="Quackenbush J."/>
            <person name="Wahlestedt C."/>
            <person name="Mattick J.S."/>
            <person name="Hume D.A."/>
            <person name="Kai C."/>
            <person name="Sasaki D."/>
            <person name="Tomaru Y."/>
            <person name="Fukuda S."/>
            <person name="Kanamori-Katayama M."/>
            <person name="Suzuki M."/>
            <person name="Aoki J."/>
            <person name="Arakawa T."/>
            <person name="Iida J."/>
            <person name="Imamura K."/>
            <person name="Itoh M."/>
            <person name="Kato T."/>
            <person name="Kawaji H."/>
            <person name="Kawagashira N."/>
            <person name="Kawashima T."/>
            <person name="Kojima M."/>
            <person name="Kondo S."/>
            <person name="Konno H."/>
            <person name="Nakano K."/>
            <person name="Ninomiya N."/>
            <person name="Nishio T."/>
            <person name="Okada M."/>
            <person name="Plessy C."/>
            <person name="Shibata K."/>
            <person name="Shiraki T."/>
            <person name="Suzuki S."/>
            <person name="Tagami M."/>
            <person name="Waki K."/>
            <person name="Watahiki A."/>
            <person name="Okamura-Oho Y."/>
            <person name="Suzuki H."/>
            <person name="Kawai J."/>
            <person name="Hayashizaki Y."/>
        </authorList>
    </citation>
    <scope>NUCLEOTIDE SEQUENCE [LARGE SCALE MRNA] (ISOFORM 1)</scope>
    <source>
        <strain>C57BL/6J</strain>
        <tissue>Embryo</tissue>
        <tissue>Liver</tissue>
        <tissue>Tongue</tissue>
    </source>
</reference>
<reference key="2">
    <citation type="journal article" date="2009" name="PLoS Biol.">
        <title>Lineage-specific biology revealed by a finished genome assembly of the mouse.</title>
        <authorList>
            <person name="Church D.M."/>
            <person name="Goodstadt L."/>
            <person name="Hillier L.W."/>
            <person name="Zody M.C."/>
            <person name="Goldstein S."/>
            <person name="She X."/>
            <person name="Bult C.J."/>
            <person name="Agarwala R."/>
            <person name="Cherry J.L."/>
            <person name="DiCuccio M."/>
            <person name="Hlavina W."/>
            <person name="Kapustin Y."/>
            <person name="Meric P."/>
            <person name="Maglott D."/>
            <person name="Birtle Z."/>
            <person name="Marques A.C."/>
            <person name="Graves T."/>
            <person name="Zhou S."/>
            <person name="Teague B."/>
            <person name="Potamousis K."/>
            <person name="Churas C."/>
            <person name="Place M."/>
            <person name="Herschleb J."/>
            <person name="Runnheim R."/>
            <person name="Forrest D."/>
            <person name="Amos-Landgraf J."/>
            <person name="Schwartz D.C."/>
            <person name="Cheng Z."/>
            <person name="Lindblad-Toh K."/>
            <person name="Eichler E.E."/>
            <person name="Ponting C.P."/>
        </authorList>
    </citation>
    <scope>NUCLEOTIDE SEQUENCE [LARGE SCALE GENOMIC DNA]</scope>
    <source>
        <strain>C57BL/6J</strain>
    </source>
</reference>
<reference key="3">
    <citation type="journal article" date="2004" name="Genome Res.">
        <title>The status, quality, and expansion of the NIH full-length cDNA project: the Mammalian Gene Collection (MGC).</title>
        <authorList>
            <consortium name="The MGC Project Team"/>
        </authorList>
    </citation>
    <scope>NUCLEOTIDE SEQUENCE [LARGE SCALE MRNA] (ISOFORMS 1 AND 2)</scope>
    <source>
        <strain>FVB/N-3</strain>
        <tissue>Brain</tissue>
        <tissue>Mammary tumor</tissue>
    </source>
</reference>
<reference key="4">
    <citation type="journal article" date="2003" name="Proc. Natl. Acad. Sci. U.S.A.">
        <title>Mammalian Erv46 localizes to the endoplasmic reticulum-Golgi intermediate compartment and to cis-Golgi cisternae.</title>
        <authorList>
            <person name="Orci L."/>
            <person name="Ravazzola M."/>
            <person name="Mack G.J."/>
            <person name="Barlowe C."/>
            <person name="Otte S."/>
        </authorList>
    </citation>
    <scope>SUBCELLULAR LOCATION</scope>
    <scope>TISSUE SPECIFICITY</scope>
</reference>
<reference key="5">
    <citation type="journal article" date="2010" name="Cell">
        <title>A tissue-specific atlas of mouse protein phosphorylation and expression.</title>
        <authorList>
            <person name="Huttlin E.L."/>
            <person name="Jedrychowski M.P."/>
            <person name="Elias J.E."/>
            <person name="Goswami T."/>
            <person name="Rad R."/>
            <person name="Beausoleil S.A."/>
            <person name="Villen J."/>
            <person name="Haas W."/>
            <person name="Sowa M.E."/>
            <person name="Gygi S.P."/>
        </authorList>
    </citation>
    <scope>IDENTIFICATION BY MASS SPECTROMETRY [LARGE SCALE ANALYSIS]</scope>
    <source>
        <tissue>Brain</tissue>
        <tissue>Brown adipose tissue</tissue>
        <tissue>Kidney</tissue>
        <tissue>Pancreas</tissue>
        <tissue>Spleen</tissue>
        <tissue>Testis</tissue>
    </source>
</reference>
<proteinExistence type="evidence at protein level"/>
<sequence>MEALGKLKQFDAYPKTLEDFRVKTCGGATVTIVSGLLMLLLFLSELQYYLTTEVHPELYVDKSRGDKLKINIDVLFPHMPCAYLSIDAMDVAGEQQLDVEHNLFKKRLDKDGVPVSSEAERHELGKVEVTVFDPNSLDPNRCESCYGAESEDIKCCNSCEDVREAYRRRGWAFKNPDTIEQCRREGFSQKMQEQKNEGCQVYGFLEVNKVAGNFHFAPGKSFQQSHVHVHDLQSFGLDNINMTHYIKHLSFGEDYPGIVNPLDHTNVTAPQASMMFQYFVKVVPTVYMKVDGEVLRTNQFSVTRHEKVANGLLGDQGLPGVFVLYELSPMMVKLTEKHRSFTHFLTGVCAIIGGMFTVAGLIDSLIYHSARAIQKKIDLGKTT</sequence>
<organism>
    <name type="scientific">Mus musculus</name>
    <name type="common">Mouse</name>
    <dbReference type="NCBI Taxonomy" id="10090"/>
    <lineage>
        <taxon>Eukaryota</taxon>
        <taxon>Metazoa</taxon>
        <taxon>Chordata</taxon>
        <taxon>Craniata</taxon>
        <taxon>Vertebrata</taxon>
        <taxon>Euteleostomi</taxon>
        <taxon>Mammalia</taxon>
        <taxon>Eutheria</taxon>
        <taxon>Euarchontoglires</taxon>
        <taxon>Glires</taxon>
        <taxon>Rodentia</taxon>
        <taxon>Myomorpha</taxon>
        <taxon>Muroidea</taxon>
        <taxon>Muridae</taxon>
        <taxon>Murinae</taxon>
        <taxon>Mus</taxon>
        <taxon>Mus</taxon>
    </lineage>
</organism>